<sequence length="276" mass="30228">MEQSIRDEMRVLPSIDPHFEIERRIAFIKRKLQEAGCKSLVLGISGGVDSTTLGRLAQLAVDQLNEETGSNDYQFIAVRLPYGEQKDEDEAQLALSFIKPTHSISVNIKQGVDGMHAASNIALEGTGLMPEDAAKVDFVKGNVKARARMIAQYEIAGYVGGLVLGTDHSAENITGFYTKFGDGACDLAPLFGLNKRQVREVAATLGAPEVLVKKVPTADLEELAPQKADEDALNLTYEQIDDFLEGKPVSQQVVDRLVSIYKATQHKRQPIPTIYD</sequence>
<protein>
    <recommendedName>
        <fullName evidence="1">NH(3)-dependent NAD(+) synthetase</fullName>
        <ecNumber evidence="1">6.3.1.5</ecNumber>
    </recommendedName>
</protein>
<feature type="chain" id="PRO_0000152216" description="NH(3)-dependent NAD(+) synthetase">
    <location>
        <begin position="1"/>
        <end position="276"/>
    </location>
</feature>
<feature type="binding site" evidence="1">
    <location>
        <begin position="43"/>
        <end position="50"/>
    </location>
    <ligand>
        <name>ATP</name>
        <dbReference type="ChEBI" id="CHEBI:30616"/>
    </ligand>
</feature>
<feature type="binding site" evidence="1">
    <location>
        <position position="49"/>
    </location>
    <ligand>
        <name>Mg(2+)</name>
        <dbReference type="ChEBI" id="CHEBI:18420"/>
    </ligand>
</feature>
<feature type="binding site" evidence="1">
    <location>
        <position position="146"/>
    </location>
    <ligand>
        <name>deamido-NAD(+)</name>
        <dbReference type="ChEBI" id="CHEBI:58437"/>
    </ligand>
</feature>
<feature type="binding site" evidence="1">
    <location>
        <position position="166"/>
    </location>
    <ligand>
        <name>ATP</name>
        <dbReference type="ChEBI" id="CHEBI:30616"/>
    </ligand>
</feature>
<feature type="binding site" evidence="1">
    <location>
        <position position="171"/>
    </location>
    <ligand>
        <name>Mg(2+)</name>
        <dbReference type="ChEBI" id="CHEBI:18420"/>
    </ligand>
</feature>
<feature type="binding site" evidence="1">
    <location>
        <position position="179"/>
    </location>
    <ligand>
        <name>deamido-NAD(+)</name>
        <dbReference type="ChEBI" id="CHEBI:58437"/>
    </ligand>
</feature>
<feature type="binding site" evidence="1">
    <location>
        <position position="186"/>
    </location>
    <ligand>
        <name>deamido-NAD(+)</name>
        <dbReference type="ChEBI" id="CHEBI:58437"/>
    </ligand>
</feature>
<feature type="binding site" evidence="1">
    <location>
        <position position="195"/>
    </location>
    <ligand>
        <name>ATP</name>
        <dbReference type="ChEBI" id="CHEBI:30616"/>
    </ligand>
</feature>
<feature type="binding site" evidence="1">
    <location>
        <position position="217"/>
    </location>
    <ligand>
        <name>ATP</name>
        <dbReference type="ChEBI" id="CHEBI:30616"/>
    </ligand>
</feature>
<feature type="binding site" evidence="1">
    <location>
        <begin position="266"/>
        <end position="267"/>
    </location>
    <ligand>
        <name>deamido-NAD(+)</name>
        <dbReference type="ChEBI" id="CHEBI:58437"/>
    </ligand>
</feature>
<dbReference type="EC" id="6.3.1.5" evidence="1"/>
<dbReference type="EMBL" id="BA000032">
    <property type="protein sequence ID" value="BAC61755.1"/>
    <property type="molecule type" value="Genomic_DNA"/>
</dbReference>
<dbReference type="RefSeq" id="NP_799922.1">
    <property type="nucleotide sequence ID" value="NC_004605.1"/>
</dbReference>
<dbReference type="RefSeq" id="WP_005480808.1">
    <property type="nucleotide sequence ID" value="NC_004605.1"/>
</dbReference>
<dbReference type="SMR" id="Q87J41"/>
<dbReference type="GeneID" id="1191100"/>
<dbReference type="KEGG" id="vpa:VPA0412"/>
<dbReference type="PATRIC" id="fig|223926.6.peg.3353"/>
<dbReference type="eggNOG" id="COG0171">
    <property type="taxonomic scope" value="Bacteria"/>
</dbReference>
<dbReference type="HOGENOM" id="CLU_059327_3_0_6"/>
<dbReference type="UniPathway" id="UPA00253">
    <property type="reaction ID" value="UER00333"/>
</dbReference>
<dbReference type="Proteomes" id="UP000002493">
    <property type="component" value="Chromosome 2"/>
</dbReference>
<dbReference type="GO" id="GO:0005737">
    <property type="term" value="C:cytoplasm"/>
    <property type="evidence" value="ECO:0007669"/>
    <property type="project" value="InterPro"/>
</dbReference>
<dbReference type="GO" id="GO:0005524">
    <property type="term" value="F:ATP binding"/>
    <property type="evidence" value="ECO:0007669"/>
    <property type="project" value="UniProtKB-UniRule"/>
</dbReference>
<dbReference type="GO" id="GO:0004359">
    <property type="term" value="F:glutaminase activity"/>
    <property type="evidence" value="ECO:0007669"/>
    <property type="project" value="InterPro"/>
</dbReference>
<dbReference type="GO" id="GO:0046872">
    <property type="term" value="F:metal ion binding"/>
    <property type="evidence" value="ECO:0007669"/>
    <property type="project" value="UniProtKB-KW"/>
</dbReference>
<dbReference type="GO" id="GO:0003952">
    <property type="term" value="F:NAD+ synthase (glutamine-hydrolyzing) activity"/>
    <property type="evidence" value="ECO:0007669"/>
    <property type="project" value="InterPro"/>
</dbReference>
<dbReference type="GO" id="GO:0008795">
    <property type="term" value="F:NAD+ synthase activity"/>
    <property type="evidence" value="ECO:0007669"/>
    <property type="project" value="UniProtKB-UniRule"/>
</dbReference>
<dbReference type="GO" id="GO:0009435">
    <property type="term" value="P:NAD biosynthetic process"/>
    <property type="evidence" value="ECO:0007669"/>
    <property type="project" value="UniProtKB-UniRule"/>
</dbReference>
<dbReference type="CDD" id="cd00553">
    <property type="entry name" value="NAD_synthase"/>
    <property type="match status" value="1"/>
</dbReference>
<dbReference type="FunFam" id="3.40.50.620:FF:000015">
    <property type="entry name" value="NH(3)-dependent NAD(+) synthetase"/>
    <property type="match status" value="1"/>
</dbReference>
<dbReference type="Gene3D" id="3.40.50.620">
    <property type="entry name" value="HUPs"/>
    <property type="match status" value="1"/>
</dbReference>
<dbReference type="HAMAP" id="MF_00193">
    <property type="entry name" value="NadE_ammonia_dep"/>
    <property type="match status" value="1"/>
</dbReference>
<dbReference type="InterPro" id="IPR022310">
    <property type="entry name" value="NAD/GMP_synthase"/>
</dbReference>
<dbReference type="InterPro" id="IPR003694">
    <property type="entry name" value="NAD_synthase"/>
</dbReference>
<dbReference type="InterPro" id="IPR022926">
    <property type="entry name" value="NH(3)-dep_NAD(+)_synth"/>
</dbReference>
<dbReference type="InterPro" id="IPR014729">
    <property type="entry name" value="Rossmann-like_a/b/a_fold"/>
</dbReference>
<dbReference type="NCBIfam" id="TIGR00552">
    <property type="entry name" value="nadE"/>
    <property type="match status" value="1"/>
</dbReference>
<dbReference type="NCBIfam" id="NF001979">
    <property type="entry name" value="PRK00768.1"/>
    <property type="match status" value="1"/>
</dbReference>
<dbReference type="PANTHER" id="PTHR23090">
    <property type="entry name" value="NH 3 /GLUTAMINE-DEPENDENT NAD + SYNTHETASE"/>
    <property type="match status" value="1"/>
</dbReference>
<dbReference type="PANTHER" id="PTHR23090:SF7">
    <property type="entry name" value="NH(3)-DEPENDENT NAD(+) SYNTHETASE"/>
    <property type="match status" value="1"/>
</dbReference>
<dbReference type="Pfam" id="PF02540">
    <property type="entry name" value="NAD_synthase"/>
    <property type="match status" value="1"/>
</dbReference>
<dbReference type="SUPFAM" id="SSF52402">
    <property type="entry name" value="Adenine nucleotide alpha hydrolases-like"/>
    <property type="match status" value="1"/>
</dbReference>
<proteinExistence type="inferred from homology"/>
<evidence type="ECO:0000255" key="1">
    <source>
        <dbReference type="HAMAP-Rule" id="MF_00193"/>
    </source>
</evidence>
<organism>
    <name type="scientific">Vibrio parahaemolyticus serotype O3:K6 (strain RIMD 2210633)</name>
    <dbReference type="NCBI Taxonomy" id="223926"/>
    <lineage>
        <taxon>Bacteria</taxon>
        <taxon>Pseudomonadati</taxon>
        <taxon>Pseudomonadota</taxon>
        <taxon>Gammaproteobacteria</taxon>
        <taxon>Vibrionales</taxon>
        <taxon>Vibrionaceae</taxon>
        <taxon>Vibrio</taxon>
    </lineage>
</organism>
<accession>Q87J41</accession>
<gene>
    <name evidence="1" type="primary">nadE</name>
    <name type="ordered locus">VPA0412</name>
</gene>
<keyword id="KW-0067">ATP-binding</keyword>
<keyword id="KW-0436">Ligase</keyword>
<keyword id="KW-0460">Magnesium</keyword>
<keyword id="KW-0479">Metal-binding</keyword>
<keyword id="KW-0520">NAD</keyword>
<keyword id="KW-0547">Nucleotide-binding</keyword>
<comment type="function">
    <text evidence="1">Catalyzes the ATP-dependent amidation of deamido-NAD to form NAD. Uses ammonia as a nitrogen source.</text>
</comment>
<comment type="catalytic activity">
    <reaction evidence="1">
        <text>deamido-NAD(+) + NH4(+) + ATP = AMP + diphosphate + NAD(+) + H(+)</text>
        <dbReference type="Rhea" id="RHEA:21188"/>
        <dbReference type="ChEBI" id="CHEBI:15378"/>
        <dbReference type="ChEBI" id="CHEBI:28938"/>
        <dbReference type="ChEBI" id="CHEBI:30616"/>
        <dbReference type="ChEBI" id="CHEBI:33019"/>
        <dbReference type="ChEBI" id="CHEBI:57540"/>
        <dbReference type="ChEBI" id="CHEBI:58437"/>
        <dbReference type="ChEBI" id="CHEBI:456215"/>
        <dbReference type="EC" id="6.3.1.5"/>
    </reaction>
</comment>
<comment type="pathway">
    <text evidence="1">Cofactor biosynthesis; NAD(+) biosynthesis; NAD(+) from deamido-NAD(+) (ammonia route): step 1/1.</text>
</comment>
<comment type="subunit">
    <text evidence="1">Homodimer.</text>
</comment>
<comment type="similarity">
    <text evidence="1">Belongs to the NAD synthetase family.</text>
</comment>
<reference key="1">
    <citation type="journal article" date="2003" name="Lancet">
        <title>Genome sequence of Vibrio parahaemolyticus: a pathogenic mechanism distinct from that of V. cholerae.</title>
        <authorList>
            <person name="Makino K."/>
            <person name="Oshima K."/>
            <person name="Kurokawa K."/>
            <person name="Yokoyama K."/>
            <person name="Uda T."/>
            <person name="Tagomori K."/>
            <person name="Iijima Y."/>
            <person name="Najima M."/>
            <person name="Nakano M."/>
            <person name="Yamashita A."/>
            <person name="Kubota Y."/>
            <person name="Kimura S."/>
            <person name="Yasunaga T."/>
            <person name="Honda T."/>
            <person name="Shinagawa H."/>
            <person name="Hattori M."/>
            <person name="Iida T."/>
        </authorList>
    </citation>
    <scope>NUCLEOTIDE SEQUENCE [LARGE SCALE GENOMIC DNA]</scope>
    <source>
        <strain>RIMD 2210633</strain>
    </source>
</reference>
<name>NADE_VIBPA</name>